<sequence>MLPLTAAITAGGASSRFGSDKALALWQGRPLLDQVAAGLAACERRLLIAPPGKYALPGWETWPDTRPGEGPLAGLEVALTHAAPGWVAFTGVDNPALTSDYWLTLLAACRPGMSSVQALHPERGPQPLGALYHTALLPRVTGLLAAGERRLRLTAPAEQTVLVTGLGAHFFQNVNRPADLAELSGRGEESLEV</sequence>
<reference key="1">
    <citation type="journal article" date="1999" name="Science">
        <title>Genome sequence of the radioresistant bacterium Deinococcus radiodurans R1.</title>
        <authorList>
            <person name="White O."/>
            <person name="Eisen J.A."/>
            <person name="Heidelberg J.F."/>
            <person name="Hickey E.K."/>
            <person name="Peterson J.D."/>
            <person name="Dodson R.J."/>
            <person name="Haft D.H."/>
            <person name="Gwinn M.L."/>
            <person name="Nelson W.C."/>
            <person name="Richardson D.L."/>
            <person name="Moffat K.S."/>
            <person name="Qin H."/>
            <person name="Jiang L."/>
            <person name="Pamphile W."/>
            <person name="Crosby M."/>
            <person name="Shen M."/>
            <person name="Vamathevan J.J."/>
            <person name="Lam P."/>
            <person name="McDonald L.A."/>
            <person name="Utterback T.R."/>
            <person name="Zalewski C."/>
            <person name="Makarova K.S."/>
            <person name="Aravind L."/>
            <person name="Daly M.J."/>
            <person name="Minton K.W."/>
            <person name="Fleischmann R.D."/>
            <person name="Ketchum K.A."/>
            <person name="Nelson K.E."/>
            <person name="Salzberg S.L."/>
            <person name="Smith H.O."/>
            <person name="Venter J.C."/>
            <person name="Fraser C.M."/>
        </authorList>
    </citation>
    <scope>NUCLEOTIDE SEQUENCE [LARGE SCALE GENOMIC DNA]</scope>
    <source>
        <strain>ATCC 13939 / DSM 20539 / JCM 16871 / CCUG 27074 / LMG 4051 / NBRC 15346 / NCIMB 9279 / VKM B-1422 / R1</strain>
    </source>
</reference>
<accession>Q9RWM1</accession>
<proteinExistence type="inferred from homology"/>
<organism>
    <name type="scientific">Deinococcus radiodurans (strain ATCC 13939 / DSM 20539 / JCM 16871 / CCUG 27074 / LMG 4051 / NBRC 15346 / NCIMB 9279 / VKM B-1422 / R1)</name>
    <dbReference type="NCBI Taxonomy" id="243230"/>
    <lineage>
        <taxon>Bacteria</taxon>
        <taxon>Thermotogati</taxon>
        <taxon>Deinococcota</taxon>
        <taxon>Deinococci</taxon>
        <taxon>Deinococcales</taxon>
        <taxon>Deinococcaceae</taxon>
        <taxon>Deinococcus</taxon>
    </lineage>
</organism>
<feature type="chain" id="PRO_0000134886" description="Probable molybdenum cofactor guanylyltransferase">
    <location>
        <begin position="1"/>
        <end position="193"/>
    </location>
</feature>
<feature type="binding site" evidence="1">
    <location>
        <begin position="9"/>
        <end position="11"/>
    </location>
    <ligand>
        <name>GTP</name>
        <dbReference type="ChEBI" id="CHEBI:37565"/>
    </ligand>
</feature>
<feature type="binding site" evidence="1">
    <location>
        <position position="21"/>
    </location>
    <ligand>
        <name>GTP</name>
        <dbReference type="ChEBI" id="CHEBI:37565"/>
    </ligand>
</feature>
<feature type="binding site" evidence="1">
    <location>
        <position position="64"/>
    </location>
    <ligand>
        <name>GTP</name>
        <dbReference type="ChEBI" id="CHEBI:37565"/>
    </ligand>
</feature>
<feature type="binding site" evidence="1">
    <location>
        <position position="93"/>
    </location>
    <ligand>
        <name>GTP</name>
        <dbReference type="ChEBI" id="CHEBI:37565"/>
    </ligand>
</feature>
<feature type="binding site" evidence="1">
    <location>
        <position position="93"/>
    </location>
    <ligand>
        <name>Mg(2+)</name>
        <dbReference type="ChEBI" id="CHEBI:18420"/>
    </ligand>
</feature>
<name>MOBA_DEIRA</name>
<keyword id="KW-0963">Cytoplasm</keyword>
<keyword id="KW-0342">GTP-binding</keyword>
<keyword id="KW-0460">Magnesium</keyword>
<keyword id="KW-0479">Metal-binding</keyword>
<keyword id="KW-0501">Molybdenum cofactor biosynthesis</keyword>
<keyword id="KW-0547">Nucleotide-binding</keyword>
<keyword id="KW-1185">Reference proteome</keyword>
<keyword id="KW-0808">Transferase</keyword>
<gene>
    <name evidence="1" type="primary">mobA</name>
    <name type="ordered locus">DR_0645</name>
</gene>
<protein>
    <recommendedName>
        <fullName evidence="1">Probable molybdenum cofactor guanylyltransferase</fullName>
        <shortName evidence="1">MoCo guanylyltransferase</shortName>
        <ecNumber evidence="1">2.7.7.77</ecNumber>
    </recommendedName>
    <alternativeName>
        <fullName evidence="1">GTP:molybdopterin guanylyltransferase</fullName>
    </alternativeName>
    <alternativeName>
        <fullName evidence="1">Mo-MPT guanylyltransferase</fullName>
    </alternativeName>
    <alternativeName>
        <fullName evidence="1">Molybdopterin guanylyltransferase</fullName>
    </alternativeName>
    <alternativeName>
        <fullName evidence="1">Molybdopterin-guanine dinucleotide synthase</fullName>
        <shortName evidence="1">MGD synthase</shortName>
    </alternativeName>
</protein>
<evidence type="ECO:0000255" key="1">
    <source>
        <dbReference type="HAMAP-Rule" id="MF_00316"/>
    </source>
</evidence>
<comment type="function">
    <text evidence="1">Transfers a GMP moiety from GTP to Mo-molybdopterin (Mo-MPT) cofactor (Moco or molybdenum cofactor) to form Mo-molybdopterin guanine dinucleotide (Mo-MGD) cofactor.</text>
</comment>
<comment type="catalytic activity">
    <reaction evidence="1">
        <text>Mo-molybdopterin + GTP + H(+) = Mo-molybdopterin guanine dinucleotide + diphosphate</text>
        <dbReference type="Rhea" id="RHEA:34243"/>
        <dbReference type="ChEBI" id="CHEBI:15378"/>
        <dbReference type="ChEBI" id="CHEBI:33019"/>
        <dbReference type="ChEBI" id="CHEBI:37565"/>
        <dbReference type="ChEBI" id="CHEBI:71302"/>
        <dbReference type="ChEBI" id="CHEBI:71310"/>
        <dbReference type="EC" id="2.7.7.77"/>
    </reaction>
</comment>
<comment type="cofactor">
    <cofactor evidence="1">
        <name>Mg(2+)</name>
        <dbReference type="ChEBI" id="CHEBI:18420"/>
    </cofactor>
</comment>
<comment type="subcellular location">
    <subcellularLocation>
        <location evidence="1">Cytoplasm</location>
    </subcellularLocation>
</comment>
<comment type="domain">
    <text evidence="1">The N-terminal domain determines nucleotide recognition and specific binding, while the C-terminal domain determines the specific binding to the target protein.</text>
</comment>
<comment type="similarity">
    <text evidence="1">Belongs to the MobA family.</text>
</comment>
<dbReference type="EC" id="2.7.7.77" evidence="1"/>
<dbReference type="EMBL" id="AE000513">
    <property type="protein sequence ID" value="AAF10223.1"/>
    <property type="molecule type" value="Genomic_DNA"/>
</dbReference>
<dbReference type="PIR" id="B75493">
    <property type="entry name" value="B75493"/>
</dbReference>
<dbReference type="RefSeq" id="NP_294368.1">
    <property type="nucleotide sequence ID" value="NC_001263.1"/>
</dbReference>
<dbReference type="RefSeq" id="WP_010887290.1">
    <property type="nucleotide sequence ID" value="NC_001263.1"/>
</dbReference>
<dbReference type="SMR" id="Q9RWM1"/>
<dbReference type="FunCoup" id="Q9RWM1">
    <property type="interactions" value="129"/>
</dbReference>
<dbReference type="STRING" id="243230.DR_0645"/>
<dbReference type="PaxDb" id="243230-DR_0645"/>
<dbReference type="EnsemblBacteria" id="AAF10223">
    <property type="protein sequence ID" value="AAF10223"/>
    <property type="gene ID" value="DR_0645"/>
</dbReference>
<dbReference type="GeneID" id="69516892"/>
<dbReference type="KEGG" id="dra:DR_0645"/>
<dbReference type="PATRIC" id="fig|243230.17.peg.824"/>
<dbReference type="eggNOG" id="COG0746">
    <property type="taxonomic scope" value="Bacteria"/>
</dbReference>
<dbReference type="HOGENOM" id="CLU_055597_2_1_0"/>
<dbReference type="InParanoid" id="Q9RWM1"/>
<dbReference type="OrthoDB" id="9788394at2"/>
<dbReference type="Proteomes" id="UP000002524">
    <property type="component" value="Chromosome 1"/>
</dbReference>
<dbReference type="GO" id="GO:0005737">
    <property type="term" value="C:cytoplasm"/>
    <property type="evidence" value="ECO:0007669"/>
    <property type="project" value="UniProtKB-SubCell"/>
</dbReference>
<dbReference type="GO" id="GO:0005525">
    <property type="term" value="F:GTP binding"/>
    <property type="evidence" value="ECO:0007669"/>
    <property type="project" value="UniProtKB-UniRule"/>
</dbReference>
<dbReference type="GO" id="GO:0046872">
    <property type="term" value="F:metal ion binding"/>
    <property type="evidence" value="ECO:0007669"/>
    <property type="project" value="UniProtKB-KW"/>
</dbReference>
<dbReference type="GO" id="GO:0061603">
    <property type="term" value="F:molybdenum cofactor guanylyltransferase activity"/>
    <property type="evidence" value="ECO:0007669"/>
    <property type="project" value="UniProtKB-EC"/>
</dbReference>
<dbReference type="GO" id="GO:0016779">
    <property type="term" value="F:nucleotidyltransferase activity"/>
    <property type="evidence" value="ECO:0000318"/>
    <property type="project" value="GO_Central"/>
</dbReference>
<dbReference type="GO" id="GO:0006777">
    <property type="term" value="P:Mo-molybdopterin cofactor biosynthetic process"/>
    <property type="evidence" value="ECO:0007669"/>
    <property type="project" value="UniProtKB-KW"/>
</dbReference>
<dbReference type="CDD" id="cd02503">
    <property type="entry name" value="MobA"/>
    <property type="match status" value="1"/>
</dbReference>
<dbReference type="Gene3D" id="3.90.550.10">
    <property type="entry name" value="Spore Coat Polysaccharide Biosynthesis Protein SpsA, Chain A"/>
    <property type="match status" value="1"/>
</dbReference>
<dbReference type="HAMAP" id="MF_00316">
    <property type="entry name" value="MobA"/>
    <property type="match status" value="1"/>
</dbReference>
<dbReference type="InterPro" id="IPR025877">
    <property type="entry name" value="MobA-like_NTP_Trfase"/>
</dbReference>
<dbReference type="InterPro" id="IPR013482">
    <property type="entry name" value="Molybde_CF_guanTrfase"/>
</dbReference>
<dbReference type="InterPro" id="IPR029044">
    <property type="entry name" value="Nucleotide-diphossugar_trans"/>
</dbReference>
<dbReference type="PANTHER" id="PTHR19136">
    <property type="entry name" value="MOLYBDENUM COFACTOR GUANYLYLTRANSFERASE"/>
    <property type="match status" value="1"/>
</dbReference>
<dbReference type="PANTHER" id="PTHR19136:SF81">
    <property type="entry name" value="MOLYBDENUM COFACTOR GUANYLYLTRANSFERASE"/>
    <property type="match status" value="1"/>
</dbReference>
<dbReference type="Pfam" id="PF12804">
    <property type="entry name" value="NTP_transf_3"/>
    <property type="match status" value="1"/>
</dbReference>
<dbReference type="SUPFAM" id="SSF53448">
    <property type="entry name" value="Nucleotide-diphospho-sugar transferases"/>
    <property type="match status" value="1"/>
</dbReference>